<gene>
    <name type="ORF">FPSE_08120</name>
</gene>
<evidence type="ECO:0000250" key="1">
    <source>
        <dbReference type="UniProtKB" id="W7MLD5"/>
    </source>
</evidence>
<evidence type="ECO:0000255" key="2"/>
<evidence type="ECO:0000269" key="3">
    <source>
    </source>
</evidence>
<evidence type="ECO:0000269" key="4">
    <source>
    </source>
</evidence>
<evidence type="ECO:0000269" key="5">
    <source>
    </source>
</evidence>
<evidence type="ECO:0000303" key="6">
    <source>
    </source>
</evidence>
<evidence type="ECO:0000305" key="7"/>
<evidence type="ECO:0000305" key="8">
    <source>
    </source>
</evidence>
<organism>
    <name type="scientific">Fusarium pseudograminearum (strain CS3096)</name>
    <name type="common">Wheat and barley crown-rot fungus</name>
    <dbReference type="NCBI Taxonomy" id="1028729"/>
    <lineage>
        <taxon>Eukaryota</taxon>
        <taxon>Fungi</taxon>
        <taxon>Dikarya</taxon>
        <taxon>Ascomycota</taxon>
        <taxon>Pezizomycotina</taxon>
        <taxon>Sordariomycetes</taxon>
        <taxon>Hypocreomycetidae</taxon>
        <taxon>Hypocreales</taxon>
        <taxon>Nectriaceae</taxon>
        <taxon>Fusarium</taxon>
    </lineage>
</organism>
<proteinExistence type="evidence at transcript level"/>
<keyword id="KW-0012">Acyltransferase</keyword>
<keyword id="KW-0496">Mitochondrion</keyword>
<keyword id="KW-1185">Reference proteome</keyword>
<keyword id="KW-0808">Transferase</keyword>
<keyword id="KW-0809">Transit peptide</keyword>
<comment type="function">
    <text evidence="1 3 4 5 8">Acyl-CoA transferase; part of the Fusarium detoxification of benzoxazolinone cluster involved in the degradation of benzoxazolinones produced by the host plant (PubMed:25727347, PubMed:26296598, PubMed:26828593). Maize, wheat, and rye produce the 2 benzoxazinone phytoanticipins 2,4-dihy-droxy-7-methoxy-1,4-benzoxazin-3-one (DIMBOA) and 2,4-dihydroxy-1,4-benzoxazin-3-one (DIBOA) that, due to their inherent instability once released, spontaneously degrade to the more stable corresponding benzoxazolinones, 6-methoxy-2-benzoxazolinone (MBOA) and 2-benzoxazolinone (BOA), respectively (By similarity). The first step in the detoxification of benzoxazolinones involves the hydrolysis of the cyclic ester bond of benzoxazolinones by the gamma-lactamase FDB1 to aminophenols (PubMed:26296598). FDB1 is able to convert 2-benzoxazolinone (BOA) into 2-aminophenol (2-AP), as well as 6-methoxy-2-benzoxazolinone (MBOA) into 5-methoxy-2-aminophenol (2-AMP) (PubMed:25727347, PubMed:26296598). The N-malonyltransferase FDB2 then metabolizes aminophenols via N-malonylation to non-toxic malonamic acids (PubMed:26296598). FDB2 converts 2-AP into N-(2-hydroxyphenyl) malonamic acid (HPMA) and 2-AMP into N-(2-hydroxy-4-methoxyphenyl) malonamic acid (HMPMA) (PubMed:26296598). The cluster also contains 2 transcription factors (FDB3 and FPSE_08121), an aldo-keto reductase (FPSE_08125) that possibly associates with a ketone component of BOA and MBOA degradation, an esterase (FPSE_08126), an acyl-CoA transferase (FPSE_08120), a solute carrier protein (FPSE_08119) and a transmembrane transporter (FPSE_08127) proposed to shuttle metabolites of benzoxazolinone degradation (Probable).</text>
</comment>
<comment type="subcellular location">
    <subcellularLocation>
        <location evidence="2">Mitochondrion</location>
    </subcellularLocation>
</comment>
<comment type="induction">
    <text evidence="3 5">Expression is induced in response to 2-benzoxasolinone (BOA) exposure (PubMed:25727347). Expression is also induced in response to 6-methoxy-2-benzoxazolinone (MBOA) and 2-aminophenol (2-AP) treatment (PubMed:26828593).</text>
</comment>
<comment type="disruption phenotype">
    <text evidence="5">Shows significantly reduced growth but does not affect tolerance to benzoxazolinone.</text>
</comment>
<comment type="similarity">
    <text evidence="7">Belongs to the CoA-transferase III family.</text>
</comment>
<feature type="transit peptide" description="Mitochondrion" evidence="2">
    <location>
        <begin position="1"/>
        <end position="33"/>
    </location>
</feature>
<feature type="chain" id="PRO_0000454612" description="Acyl-CoA transferase FPSE_08120">
    <location>
        <begin position="34"/>
        <end position="456"/>
    </location>
</feature>
<name>FDB20_FUSPC</name>
<accession>K3VD64</accession>
<dbReference type="EC" id="2.8.3.-" evidence="8"/>
<dbReference type="EMBL" id="CM003199">
    <property type="protein sequence ID" value="EKJ71674.1"/>
    <property type="molecule type" value="Genomic_DNA"/>
</dbReference>
<dbReference type="RefSeq" id="XP_009259513.1">
    <property type="nucleotide sequence ID" value="XM_009261238.1"/>
</dbReference>
<dbReference type="SMR" id="K3VD64"/>
<dbReference type="EnsemblFungi" id="EKJ71674">
    <property type="protein sequence ID" value="EKJ71674"/>
    <property type="gene ID" value="FPSE_08120"/>
</dbReference>
<dbReference type="GeneID" id="20366738"/>
<dbReference type="KEGG" id="fpu:FPSE_08120"/>
<dbReference type="eggNOG" id="KOG3957">
    <property type="taxonomic scope" value="Eukaryota"/>
</dbReference>
<dbReference type="HOGENOM" id="CLU_033975_0_1_1"/>
<dbReference type="OrthoDB" id="5863171at2759"/>
<dbReference type="Proteomes" id="UP000007978">
    <property type="component" value="Chromosome 2"/>
</dbReference>
<dbReference type="GO" id="GO:0005739">
    <property type="term" value="C:mitochondrion"/>
    <property type="evidence" value="ECO:0007669"/>
    <property type="project" value="UniProtKB-SubCell"/>
</dbReference>
<dbReference type="GO" id="GO:0016746">
    <property type="term" value="F:acyltransferase activity"/>
    <property type="evidence" value="ECO:0007669"/>
    <property type="project" value="UniProtKB-KW"/>
</dbReference>
<dbReference type="GO" id="GO:0047369">
    <property type="term" value="F:succinate-hydroxymethylglutarate CoA-transferase activity"/>
    <property type="evidence" value="ECO:0007669"/>
    <property type="project" value="TreeGrafter"/>
</dbReference>
<dbReference type="Gene3D" id="3.40.50.10540">
    <property type="entry name" value="Crotonobetainyl-coa:carnitine coa-transferase, domain 1"/>
    <property type="match status" value="1"/>
</dbReference>
<dbReference type="Gene3D" id="3.30.1540.10">
    <property type="entry name" value="formyl-coa transferase, domain 3"/>
    <property type="match status" value="1"/>
</dbReference>
<dbReference type="InterPro" id="IPR050483">
    <property type="entry name" value="CoA-transferase_III_domain"/>
</dbReference>
<dbReference type="InterPro" id="IPR003673">
    <property type="entry name" value="CoA-Trfase_fam_III"/>
</dbReference>
<dbReference type="InterPro" id="IPR044855">
    <property type="entry name" value="CoA-Trfase_III_dom3_sf"/>
</dbReference>
<dbReference type="InterPro" id="IPR023606">
    <property type="entry name" value="CoA-Trfase_III_dom_1_sf"/>
</dbReference>
<dbReference type="PANTHER" id="PTHR48207">
    <property type="entry name" value="SUCCINATE--HYDROXYMETHYLGLUTARATE COA-TRANSFERASE"/>
    <property type="match status" value="1"/>
</dbReference>
<dbReference type="PANTHER" id="PTHR48207:SF3">
    <property type="entry name" value="SUCCINATE--HYDROXYMETHYLGLUTARATE COA-TRANSFERASE"/>
    <property type="match status" value="1"/>
</dbReference>
<dbReference type="Pfam" id="PF02515">
    <property type="entry name" value="CoA_transf_3"/>
    <property type="match status" value="1"/>
</dbReference>
<dbReference type="SUPFAM" id="SSF89796">
    <property type="entry name" value="CoA-transferase family III (CaiB/BaiF)"/>
    <property type="match status" value="1"/>
</dbReference>
<protein>
    <recommendedName>
        <fullName evidence="6">Acyl-CoA transferase FPSE_08120</fullName>
        <ecNumber evidence="8">2.8.3.-</ecNumber>
    </recommendedName>
    <alternativeName>
        <fullName evidence="6">Fusarium detoxification of benzoxazolinone cluster protein FPSE_08120</fullName>
        <shortName evidence="6">FDB cluster protein FPSE_08120</shortName>
    </alternativeName>
</protein>
<sequence length="456" mass="49273">MARLLFSGQRLRPSFLRSYIRANPSSTPSATRAAINYRYNSNNAALQSASSSQGALTGIKIIDLSRVLAGPFCTQILADYGAEVTKVEAVGKGDDTRHWIMAGEKASWNESSGPISNYFAAVNRNKRSITVNFKKAEGRQLILDLIKDADVVVENFKPGTMERLGLGYDVLKELNPRIIYAGLSGYGRTGPYRTRGGYDPIAAAEAGLLHVTGEKNGPPVRAGIGLVDMSTGLFLHGAILSALIARARDGTGQRVDASLFETQLSLLTNVGLAWLNLGIEAERWGCQHPSIAPYDAFKTRDRYLVCGATNDNQYAALCCLLGVEHLVTDPRFITNPLRVQHREELAALLGPIFASKTIDEWIALFEPSGLPFGPINNMEATFAHPQTAARDMVIDVPMDAACAGSIKVIGPAVKFGDSKTGLRTGPPRLGQHTVEILEEIGMDAEAIAKYKEDGII</sequence>
<reference key="1">
    <citation type="journal article" date="2012" name="PLoS Pathog.">
        <title>Comparative pathogenomics reveals horizontally acquired novel virulence genes in fungi infecting cereal hosts.</title>
        <authorList>
            <person name="Gardiner D.M."/>
            <person name="McDonald M.C."/>
            <person name="Covarelli L."/>
            <person name="Solomon P.S."/>
            <person name="Rusu A.G."/>
            <person name="Marshall M."/>
            <person name="Kazan K."/>
            <person name="Chakraborty S."/>
            <person name="McDonald B.A."/>
            <person name="Manners J.M."/>
        </authorList>
    </citation>
    <scope>NUCLEOTIDE SEQUENCE [LARGE SCALE GENOMIC DNA]</scope>
    <source>
        <strain>CS3096</strain>
    </source>
</reference>
<reference key="2">
    <citation type="journal article" date="2015" name="Fungal Genet. Biol.">
        <title>A gamma-lactamase from cereal infecting Fusarium spp. catalyses the first step in the degradation of the benzoxazolinone class of phytoalexins.</title>
        <authorList>
            <person name="Kettle A.J."/>
            <person name="Carere J."/>
            <person name="Batley J."/>
            <person name="Benfield A.H."/>
            <person name="Manners J.M."/>
            <person name="Kazan K."/>
            <person name="Gardiner D.M."/>
        </authorList>
    </citation>
    <scope>FUNCTION</scope>
</reference>
<reference key="3">
    <citation type="journal article" date="2015" name="Mol. Plant Pathol.">
        <title>Degradation of the benzoxazolinone class of phytoalexins is important for virulence of Fusarium pseudograminearum towards wheat.</title>
        <authorList>
            <person name="Kettle A.J."/>
            <person name="Batley J."/>
            <person name="Benfield A.H."/>
            <person name="Manners J.M."/>
            <person name="Kazan K."/>
            <person name="Gardiner D.M."/>
        </authorList>
    </citation>
    <scope>FUNCTION</scope>
    <scope>INDUCTION</scope>
</reference>
<reference key="4">
    <citation type="journal article" date="2016" name="Fungal Genet. Biol.">
        <title>The Fdb3 transcription factor of the Fusarium Detoxification of Benzoxazolinone gene cluster is required for MBOA but not BOA degradation in Fusarium pseudograminearum.</title>
        <authorList>
            <person name="Kettle A.J."/>
            <person name="Carere J."/>
            <person name="Batley J."/>
            <person name="Manners J.M."/>
            <person name="Kazan K."/>
            <person name="Gardiner D.M."/>
        </authorList>
    </citation>
    <scope>FUNCTION</scope>
    <scope>INDUCTION</scope>
    <scope>DISRUPTION PHENOTYPE</scope>
</reference>